<protein>
    <recommendedName>
        <fullName evidence="1">Large ribosomal subunit protein uL3</fullName>
    </recommendedName>
    <alternativeName>
        <fullName evidence="3">50S ribosomal protein L3</fullName>
    </alternativeName>
</protein>
<keyword id="KW-0488">Methylation</keyword>
<keyword id="KW-1185">Reference proteome</keyword>
<keyword id="KW-0687">Ribonucleoprotein</keyword>
<keyword id="KW-0689">Ribosomal protein</keyword>
<keyword id="KW-0694">RNA-binding</keyword>
<keyword id="KW-0699">rRNA-binding</keyword>
<evidence type="ECO:0000255" key="1">
    <source>
        <dbReference type="HAMAP-Rule" id="MF_01325"/>
    </source>
</evidence>
<evidence type="ECO:0000256" key="2">
    <source>
        <dbReference type="SAM" id="MobiDB-lite"/>
    </source>
</evidence>
<evidence type="ECO:0000305" key="3"/>
<reference key="1">
    <citation type="journal article" date="2002" name="Nature">
        <title>Genome sequence of the plant pathogen Ralstonia solanacearum.</title>
        <authorList>
            <person name="Salanoubat M."/>
            <person name="Genin S."/>
            <person name="Artiguenave F."/>
            <person name="Gouzy J."/>
            <person name="Mangenot S."/>
            <person name="Arlat M."/>
            <person name="Billault A."/>
            <person name="Brottier P."/>
            <person name="Camus J.-C."/>
            <person name="Cattolico L."/>
            <person name="Chandler M."/>
            <person name="Choisne N."/>
            <person name="Claudel-Renard C."/>
            <person name="Cunnac S."/>
            <person name="Demange N."/>
            <person name="Gaspin C."/>
            <person name="Lavie M."/>
            <person name="Moisan A."/>
            <person name="Robert C."/>
            <person name="Saurin W."/>
            <person name="Schiex T."/>
            <person name="Siguier P."/>
            <person name="Thebault P."/>
            <person name="Whalen M."/>
            <person name="Wincker P."/>
            <person name="Levy M."/>
            <person name="Weissenbach J."/>
            <person name="Boucher C.A."/>
        </authorList>
    </citation>
    <scope>NUCLEOTIDE SEQUENCE [LARGE SCALE GENOMIC DNA]</scope>
    <source>
        <strain>ATCC BAA-1114 / GMI1000</strain>
    </source>
</reference>
<name>RL3_RALN1</name>
<proteinExistence type="inferred from homology"/>
<accession>Q8XV12</accession>
<sequence>MSLGLVGRKVGMTRVFTDDGDSIPVTVLEVGGNRVTQIKTDETDGYTAVQVTFGTRRASRVTKPLAGHLAKAGVEAGEIIVEFRIDATKAAELKLGDTIDVDLFSVDQKIDVQGTTIGKGYAGTIKRYHFSSGRASHGNSRSHNVPGSIGMAQDPGRVFPGKRMTGHMGDVTRTVQNLVIVRIDAERKLLLVKGAVPGAKSGFVVVSPAVKAKPQVAAAA</sequence>
<comment type="function">
    <text evidence="1">One of the primary rRNA binding proteins, it binds directly near the 3'-end of the 23S rRNA, where it nucleates assembly of the 50S subunit.</text>
</comment>
<comment type="subunit">
    <text evidence="1">Part of the 50S ribosomal subunit. Forms a cluster with proteins L14 and L19.</text>
</comment>
<comment type="PTM">
    <text evidence="1">Methylated by PrmB.</text>
</comment>
<comment type="similarity">
    <text evidence="1">Belongs to the universal ribosomal protein uL3 family.</text>
</comment>
<dbReference type="EMBL" id="AL646052">
    <property type="protein sequence ID" value="CAD16728.1"/>
    <property type="molecule type" value="Genomic_DNA"/>
</dbReference>
<dbReference type="RefSeq" id="WP_011002917.1">
    <property type="nucleotide sequence ID" value="NC_003295.1"/>
</dbReference>
<dbReference type="SMR" id="Q8XV12"/>
<dbReference type="STRING" id="267608.RSc3019"/>
<dbReference type="EnsemblBacteria" id="CAD16728">
    <property type="protein sequence ID" value="CAD16728"/>
    <property type="gene ID" value="RSc3019"/>
</dbReference>
<dbReference type="KEGG" id="rso:RSc3019"/>
<dbReference type="eggNOG" id="COG0087">
    <property type="taxonomic scope" value="Bacteria"/>
</dbReference>
<dbReference type="HOGENOM" id="CLU_044142_4_1_4"/>
<dbReference type="Proteomes" id="UP000001436">
    <property type="component" value="Chromosome"/>
</dbReference>
<dbReference type="GO" id="GO:0022625">
    <property type="term" value="C:cytosolic large ribosomal subunit"/>
    <property type="evidence" value="ECO:0007669"/>
    <property type="project" value="TreeGrafter"/>
</dbReference>
<dbReference type="GO" id="GO:0019843">
    <property type="term" value="F:rRNA binding"/>
    <property type="evidence" value="ECO:0007669"/>
    <property type="project" value="UniProtKB-UniRule"/>
</dbReference>
<dbReference type="GO" id="GO:0003735">
    <property type="term" value="F:structural constituent of ribosome"/>
    <property type="evidence" value="ECO:0007669"/>
    <property type="project" value="InterPro"/>
</dbReference>
<dbReference type="GO" id="GO:0006412">
    <property type="term" value="P:translation"/>
    <property type="evidence" value="ECO:0007669"/>
    <property type="project" value="UniProtKB-UniRule"/>
</dbReference>
<dbReference type="FunFam" id="2.40.30.10:FF:000004">
    <property type="entry name" value="50S ribosomal protein L3"/>
    <property type="match status" value="1"/>
</dbReference>
<dbReference type="FunFam" id="3.30.160.810:FF:000001">
    <property type="entry name" value="50S ribosomal protein L3"/>
    <property type="match status" value="1"/>
</dbReference>
<dbReference type="Gene3D" id="3.30.160.810">
    <property type="match status" value="1"/>
</dbReference>
<dbReference type="Gene3D" id="2.40.30.10">
    <property type="entry name" value="Translation factors"/>
    <property type="match status" value="1"/>
</dbReference>
<dbReference type="HAMAP" id="MF_01325_B">
    <property type="entry name" value="Ribosomal_uL3_B"/>
    <property type="match status" value="1"/>
</dbReference>
<dbReference type="InterPro" id="IPR000597">
    <property type="entry name" value="Ribosomal_uL3"/>
</dbReference>
<dbReference type="InterPro" id="IPR019927">
    <property type="entry name" value="Ribosomal_uL3_bac/org-type"/>
</dbReference>
<dbReference type="InterPro" id="IPR019926">
    <property type="entry name" value="Ribosomal_uL3_CS"/>
</dbReference>
<dbReference type="InterPro" id="IPR009000">
    <property type="entry name" value="Transl_B-barrel_sf"/>
</dbReference>
<dbReference type="NCBIfam" id="TIGR03625">
    <property type="entry name" value="L3_bact"/>
    <property type="match status" value="1"/>
</dbReference>
<dbReference type="PANTHER" id="PTHR11229">
    <property type="entry name" value="50S RIBOSOMAL PROTEIN L3"/>
    <property type="match status" value="1"/>
</dbReference>
<dbReference type="PANTHER" id="PTHR11229:SF16">
    <property type="entry name" value="LARGE RIBOSOMAL SUBUNIT PROTEIN UL3C"/>
    <property type="match status" value="1"/>
</dbReference>
<dbReference type="Pfam" id="PF00297">
    <property type="entry name" value="Ribosomal_L3"/>
    <property type="match status" value="1"/>
</dbReference>
<dbReference type="SUPFAM" id="SSF50447">
    <property type="entry name" value="Translation proteins"/>
    <property type="match status" value="1"/>
</dbReference>
<dbReference type="PROSITE" id="PS00474">
    <property type="entry name" value="RIBOSOMAL_L3"/>
    <property type="match status" value="1"/>
</dbReference>
<feature type="chain" id="PRO_0000077141" description="Large ribosomal subunit protein uL3">
    <location>
        <begin position="1"/>
        <end position="220"/>
    </location>
</feature>
<feature type="region of interest" description="Disordered" evidence="2">
    <location>
        <begin position="132"/>
        <end position="153"/>
    </location>
</feature>
<feature type="compositionally biased region" description="Polar residues" evidence="2">
    <location>
        <begin position="133"/>
        <end position="145"/>
    </location>
</feature>
<feature type="modified residue" description="N5-methylglutamine" evidence="1">
    <location>
        <position position="153"/>
    </location>
</feature>
<organism>
    <name type="scientific">Ralstonia nicotianae (strain ATCC BAA-1114 / GMI1000)</name>
    <name type="common">Ralstonia solanacearum</name>
    <dbReference type="NCBI Taxonomy" id="267608"/>
    <lineage>
        <taxon>Bacteria</taxon>
        <taxon>Pseudomonadati</taxon>
        <taxon>Pseudomonadota</taxon>
        <taxon>Betaproteobacteria</taxon>
        <taxon>Burkholderiales</taxon>
        <taxon>Burkholderiaceae</taxon>
        <taxon>Ralstonia</taxon>
        <taxon>Ralstonia solanacearum species complex</taxon>
    </lineage>
</organism>
<gene>
    <name evidence="1" type="primary">rplC</name>
    <name type="ordered locus">RSc3019</name>
    <name type="ORF">RS04738</name>
</gene>